<dbReference type="EC" id="1.9.6.1" evidence="1"/>
<dbReference type="EMBL" id="CP000790">
    <property type="protein sequence ID" value="ABU73282.1"/>
    <property type="molecule type" value="Genomic_DNA"/>
</dbReference>
<dbReference type="RefSeq" id="WP_012129052.1">
    <property type="nucleotide sequence ID" value="NC_009784.1"/>
</dbReference>
<dbReference type="SMR" id="A7N7J3"/>
<dbReference type="KEGG" id="vha:VIBHAR_05377"/>
<dbReference type="PATRIC" id="fig|338187.25.peg.4859"/>
<dbReference type="Proteomes" id="UP000008152">
    <property type="component" value="Chromosome II"/>
</dbReference>
<dbReference type="GO" id="GO:0016020">
    <property type="term" value="C:membrane"/>
    <property type="evidence" value="ECO:0007669"/>
    <property type="project" value="TreeGrafter"/>
</dbReference>
<dbReference type="GO" id="GO:0009325">
    <property type="term" value="C:nitrate reductase complex"/>
    <property type="evidence" value="ECO:0007669"/>
    <property type="project" value="TreeGrafter"/>
</dbReference>
<dbReference type="GO" id="GO:0042597">
    <property type="term" value="C:periplasmic space"/>
    <property type="evidence" value="ECO:0007669"/>
    <property type="project" value="UniProtKB-SubCell"/>
</dbReference>
<dbReference type="GO" id="GO:0051539">
    <property type="term" value="F:4 iron, 4 sulfur cluster binding"/>
    <property type="evidence" value="ECO:0007669"/>
    <property type="project" value="UniProtKB-KW"/>
</dbReference>
<dbReference type="GO" id="GO:0009055">
    <property type="term" value="F:electron transfer activity"/>
    <property type="evidence" value="ECO:0007669"/>
    <property type="project" value="UniProtKB-UniRule"/>
</dbReference>
<dbReference type="GO" id="GO:0005506">
    <property type="term" value="F:iron ion binding"/>
    <property type="evidence" value="ECO:0007669"/>
    <property type="project" value="UniProtKB-UniRule"/>
</dbReference>
<dbReference type="GO" id="GO:0030151">
    <property type="term" value="F:molybdenum ion binding"/>
    <property type="evidence" value="ECO:0007669"/>
    <property type="project" value="InterPro"/>
</dbReference>
<dbReference type="GO" id="GO:0043546">
    <property type="term" value="F:molybdopterin cofactor binding"/>
    <property type="evidence" value="ECO:0007669"/>
    <property type="project" value="InterPro"/>
</dbReference>
<dbReference type="GO" id="GO:0050140">
    <property type="term" value="F:nitrate reductase (cytochrome) activity"/>
    <property type="evidence" value="ECO:0007669"/>
    <property type="project" value="UniProtKB-EC"/>
</dbReference>
<dbReference type="GO" id="GO:0045333">
    <property type="term" value="P:cellular respiration"/>
    <property type="evidence" value="ECO:0007669"/>
    <property type="project" value="UniProtKB-ARBA"/>
</dbReference>
<dbReference type="GO" id="GO:0006777">
    <property type="term" value="P:Mo-molybdopterin cofactor biosynthetic process"/>
    <property type="evidence" value="ECO:0007669"/>
    <property type="project" value="UniProtKB-UniRule"/>
</dbReference>
<dbReference type="GO" id="GO:0042128">
    <property type="term" value="P:nitrate assimilation"/>
    <property type="evidence" value="ECO:0007669"/>
    <property type="project" value="UniProtKB-UniRule"/>
</dbReference>
<dbReference type="CDD" id="cd02791">
    <property type="entry name" value="MopB_CT_Nitrate-R-NapA-like"/>
    <property type="match status" value="1"/>
</dbReference>
<dbReference type="CDD" id="cd02754">
    <property type="entry name" value="MopB_Nitrate-R-NapA-like"/>
    <property type="match status" value="1"/>
</dbReference>
<dbReference type="FunFam" id="2.40.40.20:FF:000005">
    <property type="entry name" value="Periplasmic nitrate reductase"/>
    <property type="match status" value="1"/>
</dbReference>
<dbReference type="Gene3D" id="2.40.40.20">
    <property type="match status" value="1"/>
</dbReference>
<dbReference type="Gene3D" id="3.30.200.210">
    <property type="match status" value="1"/>
</dbReference>
<dbReference type="Gene3D" id="3.40.50.740">
    <property type="match status" value="1"/>
</dbReference>
<dbReference type="Gene3D" id="3.40.228.10">
    <property type="entry name" value="Dimethylsulfoxide Reductase, domain 2"/>
    <property type="match status" value="1"/>
</dbReference>
<dbReference type="HAMAP" id="MF_01630">
    <property type="entry name" value="Nitrate_reduct_NapA"/>
    <property type="match status" value="1"/>
</dbReference>
<dbReference type="InterPro" id="IPR009010">
    <property type="entry name" value="Asp_de-COase-like_dom_sf"/>
</dbReference>
<dbReference type="InterPro" id="IPR041957">
    <property type="entry name" value="CT_Nitrate-R-NapA-like"/>
</dbReference>
<dbReference type="InterPro" id="IPR006657">
    <property type="entry name" value="MoPterin_dinucl-bd_dom"/>
</dbReference>
<dbReference type="InterPro" id="IPR006656">
    <property type="entry name" value="Mopterin_OxRdtase"/>
</dbReference>
<dbReference type="InterPro" id="IPR006963">
    <property type="entry name" value="Mopterin_OxRdtase_4Fe-4S_dom"/>
</dbReference>
<dbReference type="InterPro" id="IPR027467">
    <property type="entry name" value="MopterinOxRdtase_cofactor_BS"/>
</dbReference>
<dbReference type="InterPro" id="IPR010051">
    <property type="entry name" value="Periplasm_NO3_reductase_lsu"/>
</dbReference>
<dbReference type="InterPro" id="IPR050123">
    <property type="entry name" value="Prok_molybdopt-oxidoreductase"/>
</dbReference>
<dbReference type="InterPro" id="IPR006311">
    <property type="entry name" value="TAT_signal"/>
</dbReference>
<dbReference type="NCBIfam" id="TIGR01706">
    <property type="entry name" value="NAPA"/>
    <property type="match status" value="1"/>
</dbReference>
<dbReference type="NCBIfam" id="NF010055">
    <property type="entry name" value="PRK13532.1"/>
    <property type="match status" value="1"/>
</dbReference>
<dbReference type="PANTHER" id="PTHR43105:SF11">
    <property type="entry name" value="PERIPLASMIC NITRATE REDUCTASE"/>
    <property type="match status" value="1"/>
</dbReference>
<dbReference type="PANTHER" id="PTHR43105">
    <property type="entry name" value="RESPIRATORY NITRATE REDUCTASE"/>
    <property type="match status" value="1"/>
</dbReference>
<dbReference type="Pfam" id="PF04879">
    <property type="entry name" value="Molybdop_Fe4S4"/>
    <property type="match status" value="1"/>
</dbReference>
<dbReference type="Pfam" id="PF00384">
    <property type="entry name" value="Molybdopterin"/>
    <property type="match status" value="1"/>
</dbReference>
<dbReference type="Pfam" id="PF01568">
    <property type="entry name" value="Molydop_binding"/>
    <property type="match status" value="1"/>
</dbReference>
<dbReference type="SMART" id="SM00926">
    <property type="entry name" value="Molybdop_Fe4S4"/>
    <property type="match status" value="1"/>
</dbReference>
<dbReference type="SUPFAM" id="SSF50692">
    <property type="entry name" value="ADC-like"/>
    <property type="match status" value="1"/>
</dbReference>
<dbReference type="SUPFAM" id="SSF53706">
    <property type="entry name" value="Formate dehydrogenase/DMSO reductase, domains 1-3"/>
    <property type="match status" value="1"/>
</dbReference>
<dbReference type="PROSITE" id="PS51669">
    <property type="entry name" value="4FE4S_MOW_BIS_MGD"/>
    <property type="match status" value="1"/>
</dbReference>
<dbReference type="PROSITE" id="PS00551">
    <property type="entry name" value="MOLYBDOPTERIN_PROK_1"/>
    <property type="match status" value="1"/>
</dbReference>
<dbReference type="PROSITE" id="PS51318">
    <property type="entry name" value="TAT"/>
    <property type="match status" value="1"/>
</dbReference>
<sequence length="829" mass="93061">MKMTRRAFVKANAAASAAAVAGITLPASATNLIASSDQTKITWDKAPCRFCGTGCSVLVGTQNGKVVATQGDPEAPVNKGLNCIKGYFLSKIMYGQDRLTKPLLRMKDGKYSKDGDFAPVSWDTAFDIMAEKWKASLEKKGPTSIGMFGSGQWTVMEGYAAAKMMKAGFRSNNIDPNARHCMASAVVGFMRAFGIDEPMGCYDDFENADAFVLWGSNMAEMHPVLWTRITDRRLSHPHVKVNVLSTYYHRSFELADHGYIFNPQSDLAIANFIANYIIENDAVNWDFVNKHTNFTQADTDIGYGLRDDDPLQKAAKNPNSGKLTSISFEEYKKSVAPYTVEKASEISGVEKEKLIELAKQYADPNTKVMSLWTMGMNQHTRGVWMNNLIYNIHLLTGKIATPGNSPFSLTGQPSACGTAREVGTFAHRLPADMVVANPKHRKIAEDIWKLPEGTIPPKPGFHAVLQDRMLHDGVLNCYWVQCNNNMQAGPNINTERLPGYRNPENFIVVSDPYPTATAQAADLVLPTAMWIEKEGAYGNAERRTQAWYQQVETIGDAKSDLWQVMEFAKRFKMEEVWPEELLAKAPEYRGKTMYDMLFKNGQVDKFPIEEAREMNDDAHHFGYYVQKGLFEEYATFGRGHGHDLAPYDVYHTVRGLRWPVVDGKETQWRFKEGSDPYAKAGSGWDFYGNADGKAKIISAPYEAPPEVPNEEFDLWLCTGRVLEHWHTGTMTRRVPELYKAVPDAVVYMHPADAKKRNVRRGEEVLIANKRGEVRVRVETRGRNRPPEGLVFVPFFDARILINKLILDATDPLSKQTDFKKCPVKITKIA</sequence>
<accession>A7N7J3</accession>
<proteinExistence type="inferred from homology"/>
<protein>
    <recommendedName>
        <fullName evidence="1">Periplasmic nitrate reductase</fullName>
        <ecNumber evidence="1">1.9.6.1</ecNumber>
    </recommendedName>
</protein>
<organism>
    <name type="scientific">Vibrio campbellii (strain ATCC BAA-1116)</name>
    <dbReference type="NCBI Taxonomy" id="2902295"/>
    <lineage>
        <taxon>Bacteria</taxon>
        <taxon>Pseudomonadati</taxon>
        <taxon>Pseudomonadota</taxon>
        <taxon>Gammaproteobacteria</taxon>
        <taxon>Vibrionales</taxon>
        <taxon>Vibrionaceae</taxon>
        <taxon>Vibrio</taxon>
    </lineage>
</organism>
<reference key="1">
    <citation type="submission" date="2007-08" db="EMBL/GenBank/DDBJ databases">
        <authorList>
            <consortium name="The Vibrio harveyi Genome Sequencing Project"/>
            <person name="Bassler B."/>
            <person name="Clifton S.W."/>
            <person name="Fulton L."/>
            <person name="Delehaunty K."/>
            <person name="Fronick C."/>
            <person name="Harrison M."/>
            <person name="Markivic C."/>
            <person name="Fulton R."/>
            <person name="Tin-Wollam A.-M."/>
            <person name="Shah N."/>
            <person name="Pepin K."/>
            <person name="Nash W."/>
            <person name="Thiruvilangam P."/>
            <person name="Bhonagiri V."/>
            <person name="Waters C."/>
            <person name="Tu K.C."/>
            <person name="Irgon J."/>
            <person name="Wilson R.K."/>
        </authorList>
    </citation>
    <scope>NUCLEOTIDE SEQUENCE [LARGE SCALE GENOMIC DNA]</scope>
    <source>
        <strain>ATCC BAA-1116 / BB120</strain>
    </source>
</reference>
<name>NAPA_VIBC1</name>
<keyword id="KW-0004">4Fe-4S</keyword>
<keyword id="KW-0249">Electron transport</keyword>
<keyword id="KW-0408">Iron</keyword>
<keyword id="KW-0411">Iron-sulfur</keyword>
<keyword id="KW-0479">Metal-binding</keyword>
<keyword id="KW-0500">Molybdenum</keyword>
<keyword id="KW-0534">Nitrate assimilation</keyword>
<keyword id="KW-0560">Oxidoreductase</keyword>
<keyword id="KW-0574">Periplasm</keyword>
<keyword id="KW-0732">Signal</keyword>
<keyword id="KW-0813">Transport</keyword>
<feature type="signal peptide" description="Tat-type signal" evidence="1">
    <location>
        <begin position="1"/>
        <end position="29"/>
    </location>
</feature>
<feature type="chain" id="PRO_1000069726" description="Periplasmic nitrate reductase" evidence="1">
    <location>
        <begin position="30"/>
        <end position="829"/>
    </location>
</feature>
<feature type="domain" description="4Fe-4S Mo/W bis-MGD-type" evidence="1">
    <location>
        <begin position="41"/>
        <end position="97"/>
    </location>
</feature>
<feature type="binding site" evidence="1">
    <location>
        <position position="48"/>
    </location>
    <ligand>
        <name>[4Fe-4S] cluster</name>
        <dbReference type="ChEBI" id="CHEBI:49883"/>
    </ligand>
</feature>
<feature type="binding site" evidence="1">
    <location>
        <position position="51"/>
    </location>
    <ligand>
        <name>[4Fe-4S] cluster</name>
        <dbReference type="ChEBI" id="CHEBI:49883"/>
    </ligand>
</feature>
<feature type="binding site" evidence="1">
    <location>
        <position position="55"/>
    </location>
    <ligand>
        <name>[4Fe-4S] cluster</name>
        <dbReference type="ChEBI" id="CHEBI:49883"/>
    </ligand>
</feature>
<feature type="binding site" evidence="1">
    <location>
        <position position="83"/>
    </location>
    <ligand>
        <name>[4Fe-4S] cluster</name>
        <dbReference type="ChEBI" id="CHEBI:49883"/>
    </ligand>
</feature>
<feature type="binding site" evidence="1">
    <location>
        <position position="85"/>
    </location>
    <ligand>
        <name>Mo-bis(molybdopterin guanine dinucleotide)</name>
        <dbReference type="ChEBI" id="CHEBI:60539"/>
    </ligand>
</feature>
<feature type="binding site" evidence="1">
    <location>
        <position position="152"/>
    </location>
    <ligand>
        <name>Mo-bis(molybdopterin guanine dinucleotide)</name>
        <dbReference type="ChEBI" id="CHEBI:60539"/>
    </ligand>
</feature>
<feature type="binding site" evidence="1">
    <location>
        <position position="177"/>
    </location>
    <ligand>
        <name>Mo-bis(molybdopterin guanine dinucleotide)</name>
        <dbReference type="ChEBI" id="CHEBI:60539"/>
    </ligand>
</feature>
<feature type="binding site" evidence="1">
    <location>
        <position position="181"/>
    </location>
    <ligand>
        <name>Mo-bis(molybdopterin guanine dinucleotide)</name>
        <dbReference type="ChEBI" id="CHEBI:60539"/>
    </ligand>
</feature>
<feature type="binding site" evidence="1">
    <location>
        <begin position="214"/>
        <end position="221"/>
    </location>
    <ligand>
        <name>Mo-bis(molybdopterin guanine dinucleotide)</name>
        <dbReference type="ChEBI" id="CHEBI:60539"/>
    </ligand>
</feature>
<feature type="binding site" evidence="1">
    <location>
        <begin position="245"/>
        <end position="249"/>
    </location>
    <ligand>
        <name>Mo-bis(molybdopterin guanine dinucleotide)</name>
        <dbReference type="ChEBI" id="CHEBI:60539"/>
    </ligand>
</feature>
<feature type="binding site" evidence="1">
    <location>
        <begin position="264"/>
        <end position="266"/>
    </location>
    <ligand>
        <name>Mo-bis(molybdopterin guanine dinucleotide)</name>
        <dbReference type="ChEBI" id="CHEBI:60539"/>
    </ligand>
</feature>
<feature type="binding site" evidence="1">
    <location>
        <position position="374"/>
    </location>
    <ligand>
        <name>Mo-bis(molybdopterin guanine dinucleotide)</name>
        <dbReference type="ChEBI" id="CHEBI:60539"/>
    </ligand>
</feature>
<feature type="binding site" evidence="1">
    <location>
        <position position="378"/>
    </location>
    <ligand>
        <name>Mo-bis(molybdopterin guanine dinucleotide)</name>
        <dbReference type="ChEBI" id="CHEBI:60539"/>
    </ligand>
</feature>
<feature type="binding site" evidence="1">
    <location>
        <position position="484"/>
    </location>
    <ligand>
        <name>Mo-bis(molybdopterin guanine dinucleotide)</name>
        <dbReference type="ChEBI" id="CHEBI:60539"/>
    </ligand>
</feature>
<feature type="binding site" evidence="1">
    <location>
        <begin position="510"/>
        <end position="511"/>
    </location>
    <ligand>
        <name>Mo-bis(molybdopterin guanine dinucleotide)</name>
        <dbReference type="ChEBI" id="CHEBI:60539"/>
    </ligand>
</feature>
<feature type="binding site" evidence="1">
    <location>
        <position position="533"/>
    </location>
    <ligand>
        <name>Mo-bis(molybdopterin guanine dinucleotide)</name>
        <dbReference type="ChEBI" id="CHEBI:60539"/>
    </ligand>
</feature>
<feature type="binding site" evidence="1">
    <location>
        <position position="560"/>
    </location>
    <ligand>
        <name>Mo-bis(molybdopterin guanine dinucleotide)</name>
        <dbReference type="ChEBI" id="CHEBI:60539"/>
    </ligand>
</feature>
<feature type="binding site" evidence="1">
    <location>
        <begin position="718"/>
        <end position="727"/>
    </location>
    <ligand>
        <name>Mo-bis(molybdopterin guanine dinucleotide)</name>
        <dbReference type="ChEBI" id="CHEBI:60539"/>
    </ligand>
</feature>
<feature type="binding site" evidence="1">
    <location>
        <position position="794"/>
    </location>
    <ligand>
        <name>substrate</name>
    </ligand>
</feature>
<feature type="binding site" evidence="1">
    <location>
        <position position="802"/>
    </location>
    <ligand>
        <name>Mo-bis(molybdopterin guanine dinucleotide)</name>
        <dbReference type="ChEBI" id="CHEBI:60539"/>
    </ligand>
</feature>
<feature type="binding site" evidence="1">
    <location>
        <position position="819"/>
    </location>
    <ligand>
        <name>Mo-bis(molybdopterin guanine dinucleotide)</name>
        <dbReference type="ChEBI" id="CHEBI:60539"/>
    </ligand>
</feature>
<comment type="function">
    <text evidence="1">Catalytic subunit of the periplasmic nitrate reductase complex NapAB. Receives electrons from NapB and catalyzes the reduction of nitrate to nitrite.</text>
</comment>
<comment type="catalytic activity">
    <reaction evidence="1">
        <text>2 Fe(II)-[cytochrome] + nitrate + 2 H(+) = 2 Fe(III)-[cytochrome] + nitrite + H2O</text>
        <dbReference type="Rhea" id="RHEA:12909"/>
        <dbReference type="Rhea" id="RHEA-COMP:11777"/>
        <dbReference type="Rhea" id="RHEA-COMP:11778"/>
        <dbReference type="ChEBI" id="CHEBI:15377"/>
        <dbReference type="ChEBI" id="CHEBI:15378"/>
        <dbReference type="ChEBI" id="CHEBI:16301"/>
        <dbReference type="ChEBI" id="CHEBI:17632"/>
        <dbReference type="ChEBI" id="CHEBI:29033"/>
        <dbReference type="ChEBI" id="CHEBI:29034"/>
        <dbReference type="EC" id="1.9.6.1"/>
    </reaction>
</comment>
<comment type="cofactor">
    <cofactor evidence="1">
        <name>[4Fe-4S] cluster</name>
        <dbReference type="ChEBI" id="CHEBI:49883"/>
    </cofactor>
    <text evidence="1">Binds 1 [4Fe-4S] cluster.</text>
</comment>
<comment type="cofactor">
    <cofactor evidence="1">
        <name>Mo-bis(molybdopterin guanine dinucleotide)</name>
        <dbReference type="ChEBI" id="CHEBI:60539"/>
    </cofactor>
    <text evidence="1">Binds 1 molybdenum-bis(molybdopterin guanine dinucleotide) (Mo-bis-MGD) cofactor per subunit.</text>
</comment>
<comment type="subunit">
    <text evidence="1">Component of the periplasmic nitrate reductase NapAB complex composed of NapA and NapB.</text>
</comment>
<comment type="subcellular location">
    <subcellularLocation>
        <location evidence="1">Periplasm</location>
    </subcellularLocation>
</comment>
<comment type="PTM">
    <text evidence="1">Predicted to be exported by the Tat system. The position of the signal peptide cleavage has not been experimentally proven.</text>
</comment>
<comment type="similarity">
    <text evidence="1">Belongs to the prokaryotic molybdopterin-containing oxidoreductase family. NasA/NapA/NarB subfamily.</text>
</comment>
<evidence type="ECO:0000255" key="1">
    <source>
        <dbReference type="HAMAP-Rule" id="MF_01630"/>
    </source>
</evidence>
<gene>
    <name evidence="1" type="primary">napA</name>
    <name type="ordered locus">VIBHAR_05377</name>
</gene>